<feature type="signal peptide" evidence="1">
    <location>
        <begin position="1"/>
        <end position="30"/>
    </location>
</feature>
<feature type="propeptide" id="PRO_0000413628" evidence="1 2">
    <location>
        <begin position="31"/>
        <end position="49"/>
    </location>
</feature>
<feature type="peptide" id="PRO_0000413629" description="Bombesin" evidence="2">
    <location>
        <begin position="50"/>
        <end position="64"/>
    </location>
</feature>
<feature type="modified residue" description="Pyrrolidone carboxylic acid" evidence="2">
    <location>
        <position position="50"/>
    </location>
</feature>
<feature type="modified residue" description="Methionine amide" evidence="2">
    <location>
        <position position="64"/>
    </location>
</feature>
<name>BOMB_RANSH</name>
<protein>
    <recommendedName>
        <fullName evidence="3">Bombesin</fullName>
    </recommendedName>
    <alternativeName>
        <fullName evidence="3">Bombesin-RS</fullName>
    </alternativeName>
</protein>
<organism>
    <name type="scientific">Rana shuchinae</name>
    <name type="common">Sichuan frog</name>
    <name type="synonym">Pelophylax shuchinae</name>
    <dbReference type="NCBI Taxonomy" id="359668"/>
    <lineage>
        <taxon>Eukaryota</taxon>
        <taxon>Metazoa</taxon>
        <taxon>Chordata</taxon>
        <taxon>Craniata</taxon>
        <taxon>Vertebrata</taxon>
        <taxon>Euteleostomi</taxon>
        <taxon>Amphibia</taxon>
        <taxon>Batrachia</taxon>
        <taxon>Anura</taxon>
        <taxon>Neobatrachia</taxon>
        <taxon>Ranoidea</taxon>
        <taxon>Ranidae</taxon>
        <taxon>Rana</taxon>
        <taxon>Rana</taxon>
    </lineage>
</organism>
<dbReference type="SMR" id="P86994"/>
<dbReference type="GO" id="GO:0005576">
    <property type="term" value="C:extracellular region"/>
    <property type="evidence" value="ECO:0007669"/>
    <property type="project" value="UniProtKB-SubCell"/>
</dbReference>
<dbReference type="GO" id="GO:0006952">
    <property type="term" value="P:defense response"/>
    <property type="evidence" value="ECO:0007669"/>
    <property type="project" value="UniProtKB-KW"/>
</dbReference>
<dbReference type="GO" id="GO:0007218">
    <property type="term" value="P:neuropeptide signaling pathway"/>
    <property type="evidence" value="ECO:0007669"/>
    <property type="project" value="InterPro"/>
</dbReference>
<dbReference type="InterPro" id="IPR000874">
    <property type="entry name" value="Bombesin"/>
</dbReference>
<dbReference type="Pfam" id="PF02044">
    <property type="entry name" value="Bombesin"/>
    <property type="match status" value="1"/>
</dbReference>
<dbReference type="PROSITE" id="PS00257">
    <property type="entry name" value="BOMBESIN"/>
    <property type="match status" value="1"/>
</dbReference>
<reference evidence="4" key="1">
    <citation type="journal article" date="2011" name="Mol. Biol. Rep.">
        <title>A novel bombesin-like peptide from skin of Rana shuchinae.</title>
        <authorList>
            <person name="Wang H."/>
            <person name="Bian J."/>
            <person name="Chen Z."/>
            <person name="Miao Y."/>
            <person name="Li W."/>
        </authorList>
    </citation>
    <scope>NUCLEOTIDE SEQUENCE [MRNA]</scope>
    <scope>PROTEIN SEQUENCE OF 50-64</scope>
    <scope>FUNCTION</scope>
    <scope>SUBCELLULAR LOCATION</scope>
    <scope>TISSUE SPECIFICITY</scope>
    <scope>PYROGLUTAMATE FORMATION AT GLN-50</scope>
    <scope>AMIDATION AT MET-64</scope>
    <scope>SYNTHESIS</scope>
    <scope>MASS SPECTROMETRY</scope>
    <source>
        <tissue evidence="2">Skin</tissue>
        <tissue evidence="2">Skin secretion</tissue>
    </source>
</reference>
<keyword id="KW-0027">Amidation</keyword>
<keyword id="KW-0878">Amphibian defense peptide</keyword>
<keyword id="KW-0165">Cleavage on pair of basic residues</keyword>
<keyword id="KW-0903">Direct protein sequencing</keyword>
<keyword id="KW-0873">Pyrrolidone carboxylic acid</keyword>
<keyword id="KW-0964">Secreted</keyword>
<keyword id="KW-0732">Signal</keyword>
<accession>P86994</accession>
<sequence>MLLLSAVKTLLLAWLGIVLVFMSIIKSAMLDFLQEAGKLEGIETYKKEAQTSFMAPSWALGHLMGRK</sequence>
<evidence type="ECO:0000255" key="1"/>
<evidence type="ECO:0000269" key="2">
    <source>
    </source>
</evidence>
<evidence type="ECO:0000303" key="3">
    <source>
    </source>
</evidence>
<evidence type="ECO:0000305" key="4"/>
<proteinExistence type="evidence at protein level"/>
<comment type="function">
    <text evidence="2">Stimulates smooth muscle contraction in isolated rat stomach strip.</text>
</comment>
<comment type="subcellular location">
    <subcellularLocation>
        <location evidence="2">Secreted</location>
    </subcellularLocation>
</comment>
<comment type="tissue specificity">
    <text evidence="2">Expressed by the skin glands.</text>
</comment>
<comment type="mass spectrometry"/>
<comment type="similarity">
    <text evidence="1">Belongs to the bombesin/neuromedin-B/ranatensin family.</text>
</comment>